<gene>
    <name evidence="6" type="ordered locus">TK1697</name>
</gene>
<reference key="1">
    <citation type="journal article" date="2005" name="Genome Res.">
        <title>Complete genome sequence of the hyperthermophilic archaeon Thermococcus kodakaraensis KOD1 and comparison with Pyrococcus genomes.</title>
        <authorList>
            <person name="Fukui T."/>
            <person name="Atomi H."/>
            <person name="Kanai T."/>
            <person name="Matsumi R."/>
            <person name="Fujiwara S."/>
            <person name="Imanaka T."/>
        </authorList>
    </citation>
    <scope>NUCLEOTIDE SEQUENCE [LARGE SCALE GENOMIC DNA]</scope>
    <source>
        <strain>ATCC BAA-918 / JCM 12380 / KOD1</strain>
    </source>
</reference>
<reference key="2">
    <citation type="journal article" date="2019" name="MBio">
        <title>Identification of dephospho-coenzyme A (dephospho-CoA) kinase in Thermococcus kodakarensis and elucidation of the entire CoA biosynthesis pathway in archaea.</title>
        <authorList>
            <person name="Shimosaka T."/>
            <person name="Makarova K.S."/>
            <person name="Koonin E.V."/>
            <person name="Atomi H."/>
        </authorList>
    </citation>
    <scope>FUNCTION</scope>
    <scope>CATALYTIC ACTIVITY</scope>
    <scope>BIOPHYSICOCHEMICAL PROPERTIES</scope>
    <scope>PATHWAY</scope>
    <scope>SUBUNIT</scope>
    <scope>DISRUPTION PHENOTYPE</scope>
    <scope>MUTAGENESIS OF ASP-48; ASP-67 AND ASP-125</scope>
    <source>
        <strain>ATCC BAA-918 / JCM 12380 / KOD1</strain>
    </source>
</reference>
<reference evidence="7 8 9" key="3">
    <citation type="journal article" date="2024" name="Proteins">
        <title>Crystal structure of GTP-dependent dephospho-coenzyme A kinase from the hyperthermophilic archaeon, Thermococcus kodakarensis.</title>
        <authorList>
            <person name="Kita A."/>
            <person name="Ishida Y."/>
            <person name="Shimosaka T."/>
            <person name="Michimori Y."/>
            <person name="Makarova K."/>
            <person name="Koonin E."/>
            <person name="Atomi H."/>
            <person name="Miki K."/>
        </authorList>
    </citation>
    <scope>X-RAY CRYSTALLOGRAPHY (2.15 ANGSTROMS) IN COMPLEX WITH GTP AND MAGNESIUM</scope>
    <scope>FUNCTION</scope>
    <scope>CATALYTIC ACTIVITY</scope>
    <scope>SUBUNIT</scope>
    <scope>MUTAGENESIS OF TYR-31; ASP-48; GLU-52; TYR-66; ASP-67; ARG-72; ASN-90; HIS-117; GLU-123; GLU-124; ASP-125 AND TYR-143</scope>
    <source>
        <strain>ATCC BAA-918 / JCM 12380 / KOD1</strain>
    </source>
</reference>
<organism>
    <name type="scientific">Thermococcus kodakarensis (strain ATCC BAA-918 / JCM 12380 / KOD1)</name>
    <name type="common">Pyrococcus kodakaraensis (strain KOD1)</name>
    <dbReference type="NCBI Taxonomy" id="69014"/>
    <lineage>
        <taxon>Archaea</taxon>
        <taxon>Methanobacteriati</taxon>
        <taxon>Methanobacteriota</taxon>
        <taxon>Thermococci</taxon>
        <taxon>Thermococcales</taxon>
        <taxon>Thermococcaceae</taxon>
        <taxon>Thermococcus</taxon>
    </lineage>
</organism>
<feature type="chain" id="PRO_0000137617" description="GTP-dependent dephospho-CoA kinase">
    <location>
        <begin position="1"/>
        <end position="177"/>
    </location>
</feature>
<feature type="binding site" evidence="3 8">
    <location>
        <position position="25"/>
    </location>
    <ligand>
        <name>GTP</name>
        <dbReference type="ChEBI" id="CHEBI:37565"/>
    </ligand>
</feature>
<feature type="binding site" evidence="3 8">
    <location>
        <position position="31"/>
    </location>
    <ligand>
        <name>GTP</name>
        <dbReference type="ChEBI" id="CHEBI:37565"/>
    </ligand>
</feature>
<feature type="binding site" evidence="3 8">
    <location>
        <position position="48"/>
    </location>
    <ligand>
        <name>GTP</name>
        <dbReference type="ChEBI" id="CHEBI:37565"/>
    </ligand>
</feature>
<feature type="binding site" evidence="3 8">
    <location>
        <position position="49"/>
    </location>
    <ligand>
        <name>GTP</name>
        <dbReference type="ChEBI" id="CHEBI:37565"/>
    </ligand>
</feature>
<feature type="binding site" evidence="3 8">
    <location>
        <position position="50"/>
    </location>
    <ligand>
        <name>GTP</name>
        <dbReference type="ChEBI" id="CHEBI:37565"/>
    </ligand>
</feature>
<feature type="binding site" evidence="3 8">
    <location>
        <position position="67"/>
    </location>
    <ligand>
        <name>GTP</name>
        <dbReference type="ChEBI" id="CHEBI:37565"/>
    </ligand>
</feature>
<feature type="binding site" evidence="3 8">
    <location>
        <position position="69"/>
    </location>
    <ligand>
        <name>GTP</name>
        <dbReference type="ChEBI" id="CHEBI:37565"/>
    </ligand>
</feature>
<feature type="binding site" evidence="3 8">
    <location>
        <position position="124"/>
    </location>
    <ligand>
        <name>GTP</name>
        <dbReference type="ChEBI" id="CHEBI:37565"/>
    </ligand>
</feature>
<feature type="binding site" evidence="3 8">
    <location>
        <position position="147"/>
    </location>
    <ligand>
        <name>GTP</name>
        <dbReference type="ChEBI" id="CHEBI:37565"/>
    </ligand>
</feature>
<feature type="mutagenesis site" description="Strong decrease in activity." evidence="3">
    <original>Y</original>
    <variation>F</variation>
    <location>
        <position position="31"/>
    </location>
</feature>
<feature type="mutagenesis site" description="Loss of activity. Mutant shows a dramatic reduction in growth rate." evidence="2 3">
    <original>D</original>
    <variation>A</variation>
    <location>
        <position position="48"/>
    </location>
</feature>
<feature type="mutagenesis site" description="No change in activity." evidence="3">
    <original>E</original>
    <variation>A</variation>
    <location>
        <position position="52"/>
    </location>
</feature>
<feature type="mutagenesis site" description="Strong decrease in activity." evidence="3">
    <original>Y</original>
    <variation>A</variation>
    <location>
        <position position="66"/>
    </location>
</feature>
<feature type="mutagenesis site" description="Retains a low level of activity. Mutant shows a dramatic reduction in growth rate." evidence="2 3">
    <original>D</original>
    <variation>A</variation>
    <location>
        <position position="67"/>
    </location>
</feature>
<feature type="mutagenesis site" description="Small decrease in activity." evidence="3">
    <original>R</original>
    <variation>A</variation>
    <location>
        <position position="72"/>
    </location>
</feature>
<feature type="mutagenesis site" description="Decrease in activity." evidence="3">
    <original>N</original>
    <variation>A</variation>
    <location>
        <position position="90"/>
    </location>
</feature>
<feature type="mutagenesis site" description="Small decrease in activity." evidence="3">
    <original>H</original>
    <variation>A</variation>
    <location>
        <position position="117"/>
    </location>
</feature>
<feature type="mutagenesis site" description="Strong decrease in activity." evidence="3">
    <original>E</original>
    <variation>A</variation>
    <location>
        <position position="123"/>
    </location>
</feature>
<feature type="mutagenesis site" description="Retains a very low level of activity." evidence="3">
    <original>E</original>
    <variation>A</variation>
    <location>
        <position position="124"/>
    </location>
</feature>
<feature type="mutagenesis site" description="Loss of activity. Mutant shows a reduction in growth rate." evidence="2 3">
    <original>D</original>
    <variation>A</variation>
    <location>
        <position position="125"/>
    </location>
</feature>
<feature type="mutagenesis site" description="Strong decrease in activity." evidence="3">
    <original>Y</original>
    <variation>A</variation>
    <location>
        <position position="143"/>
    </location>
</feature>
<proteinExistence type="evidence at protein level"/>
<comment type="function">
    <text evidence="2 3">Catalyzes the GTP-dependent phosphorylation of the 3'-hydroxyl group of dephosphocoenzyme A to form coenzyme A (CoA) (PubMed:31337720, PubMed:38235908). Can also use UTP, with lower efficiency and has weak activity with ATP, but shows a strong preference for GTP as the phosphate donor (PubMed:31337720).</text>
</comment>
<comment type="catalytic activity">
    <reaction evidence="1 2 3">
        <text>3'-dephospho-CoA + GTP = GDP + CoA + H(+)</text>
        <dbReference type="Rhea" id="RHEA:61156"/>
        <dbReference type="ChEBI" id="CHEBI:15378"/>
        <dbReference type="ChEBI" id="CHEBI:37565"/>
        <dbReference type="ChEBI" id="CHEBI:57287"/>
        <dbReference type="ChEBI" id="CHEBI:57328"/>
        <dbReference type="ChEBI" id="CHEBI:58189"/>
        <dbReference type="EC" id="2.7.1.237"/>
    </reaction>
</comment>
<comment type="biophysicochemical properties">
    <kinetics>
        <KM evidence="2">0.14 mM for dephospho-CoA</KM>
        <KM evidence="2">0.26 mM for GTP</KM>
        <Vmax evidence="2">17.0 umol/min/mg enzyme toward dephospho-CoA</Vmax>
        <Vmax evidence="2">20.4 umol/min/mg enzyme toward GTP</Vmax>
        <text evidence="2">kcat is 5.57 sec(-1) with dephospho-CoA as substrate (PubMed:31337720). kcat is 6.68 sec(-1) with GTP as substrate (PubMed:31337720).</text>
    </kinetics>
    <phDependence>
        <text evidence="2">Optimum pH is 8.0.</text>
    </phDependence>
    <temperatureDependence>
        <text evidence="2">Optimum temperature is 80 degrees Celsius.</text>
    </temperatureDependence>
</comment>
<comment type="pathway">
    <text evidence="1 2">Cofactor biosynthesis; coenzyme A biosynthesis.</text>
</comment>
<comment type="subunit">
    <text evidence="2 3">Monomer in solution.</text>
</comment>
<comment type="disruption phenotype">
    <text evidence="2">Disruption of the gene results in CoA auxotrophy.</text>
</comment>
<comment type="similarity">
    <text evidence="1 5">Belongs to the GTP-dependent DPCK family.</text>
</comment>
<sequence length="177" mass="19657">MKMFFRLTRELRDELKRPLGELVRGPIPEPYLKVRGELEKHPVVTVGDVVTENVLKIGVKPIIALYDLKTKRKEYSPEIEDTAVFLTVTNPPGTITKALLDTVRKAFGLAERGRNVHILVSGEEDLAAIPAVLYAPLGTLVLYGQPDEGVVLIKVTPECKRRCAKILASMEVVRDGD</sequence>
<accession>Q5JIY7</accession>
<protein>
    <recommendedName>
        <fullName evidence="1 4">GTP-dependent dephospho-CoA kinase</fullName>
        <ecNumber evidence="1 2 3">2.7.1.237</ecNumber>
    </recommendedName>
    <alternativeName>
        <fullName evidence="1 4">Dephospho-coenzyme A kinase</fullName>
        <shortName evidence="1 4">DPCK</shortName>
    </alternativeName>
</protein>
<evidence type="ECO:0000255" key="1">
    <source>
        <dbReference type="HAMAP-Rule" id="MF_00590"/>
    </source>
</evidence>
<evidence type="ECO:0000269" key="2">
    <source>
    </source>
</evidence>
<evidence type="ECO:0000269" key="3">
    <source>
    </source>
</evidence>
<evidence type="ECO:0000303" key="4">
    <source>
    </source>
</evidence>
<evidence type="ECO:0000305" key="5"/>
<evidence type="ECO:0000312" key="6">
    <source>
        <dbReference type="EMBL" id="BAD85886.1"/>
    </source>
</evidence>
<evidence type="ECO:0007744" key="7">
    <source>
        <dbReference type="PDB" id="8JVC"/>
    </source>
</evidence>
<evidence type="ECO:0007744" key="8">
    <source>
        <dbReference type="PDB" id="8JVF"/>
    </source>
</evidence>
<evidence type="ECO:0007744" key="9">
    <source>
        <dbReference type="PDB" id="8JVG"/>
    </source>
</evidence>
<keyword id="KW-0002">3D-structure</keyword>
<keyword id="KW-0173">Coenzyme A biosynthesis</keyword>
<keyword id="KW-0342">GTP-binding</keyword>
<keyword id="KW-0418">Kinase</keyword>
<keyword id="KW-0547">Nucleotide-binding</keyword>
<keyword id="KW-1185">Reference proteome</keyword>
<keyword id="KW-0808">Transferase</keyword>
<name>DPCKG_THEKO</name>
<dbReference type="EC" id="2.7.1.237" evidence="1 2 3"/>
<dbReference type="EMBL" id="AP006878">
    <property type="protein sequence ID" value="BAD85886.1"/>
    <property type="molecule type" value="Genomic_DNA"/>
</dbReference>
<dbReference type="PDB" id="8JVC">
    <property type="method" value="X-ray"/>
    <property type="resolution" value="2.15 A"/>
    <property type="chains" value="A=1-177"/>
</dbReference>
<dbReference type="PDB" id="8JVF">
    <property type="method" value="X-ray"/>
    <property type="resolution" value="2.40 A"/>
    <property type="chains" value="A=1-177"/>
</dbReference>
<dbReference type="PDB" id="8JVG">
    <property type="method" value="X-ray"/>
    <property type="resolution" value="2.50 A"/>
    <property type="chains" value="A/B=1-177"/>
</dbReference>
<dbReference type="PDBsum" id="8JVC"/>
<dbReference type="PDBsum" id="8JVF"/>
<dbReference type="PDBsum" id="8JVG"/>
<dbReference type="SMR" id="Q5JIY7"/>
<dbReference type="FunCoup" id="Q5JIY7">
    <property type="interactions" value="5"/>
</dbReference>
<dbReference type="STRING" id="69014.TK1697"/>
<dbReference type="EnsemblBacteria" id="BAD85886">
    <property type="protein sequence ID" value="BAD85886"/>
    <property type="gene ID" value="TK1697"/>
</dbReference>
<dbReference type="KEGG" id="tko:TK1697"/>
<dbReference type="PATRIC" id="fig|69014.16.peg.1655"/>
<dbReference type="eggNOG" id="arCOG04076">
    <property type="taxonomic scope" value="Archaea"/>
</dbReference>
<dbReference type="HOGENOM" id="CLU_120795_1_0_2"/>
<dbReference type="InParanoid" id="Q5JIY7"/>
<dbReference type="PhylomeDB" id="Q5JIY7"/>
<dbReference type="BioCyc" id="MetaCyc:MONOMER-21893"/>
<dbReference type="BRENDA" id="2.7.1.24">
    <property type="organism ID" value="5246"/>
</dbReference>
<dbReference type="BRENDA" id="2.7.1.B30">
    <property type="organism ID" value="5246"/>
</dbReference>
<dbReference type="UniPathway" id="UPA00241"/>
<dbReference type="Proteomes" id="UP000000536">
    <property type="component" value="Chromosome"/>
</dbReference>
<dbReference type="GO" id="GO:0005525">
    <property type="term" value="F:GTP binding"/>
    <property type="evidence" value="ECO:0007669"/>
    <property type="project" value="UniProtKB-UniRule"/>
</dbReference>
<dbReference type="GO" id="GO:0016301">
    <property type="term" value="F:kinase activity"/>
    <property type="evidence" value="ECO:0007669"/>
    <property type="project" value="UniProtKB-UniRule"/>
</dbReference>
<dbReference type="GO" id="GO:0015937">
    <property type="term" value="P:coenzyme A biosynthetic process"/>
    <property type="evidence" value="ECO:0007669"/>
    <property type="project" value="UniProtKB-UniRule"/>
</dbReference>
<dbReference type="HAMAP" id="MF_00590">
    <property type="entry name" value="Dephospho_CoA_kinase_GTP_dep"/>
    <property type="match status" value="1"/>
</dbReference>
<dbReference type="InterPro" id="IPR054930">
    <property type="entry name" value="deph_CoA_kin_Thcocales"/>
</dbReference>
<dbReference type="InterPro" id="IPR007164">
    <property type="entry name" value="GTP-dep_dephospho-CoA_kin"/>
</dbReference>
<dbReference type="NCBIfam" id="NF041125">
    <property type="entry name" value="deph_CoA_kin_Thcocales"/>
    <property type="match status" value="1"/>
</dbReference>
<dbReference type="NCBIfam" id="NF002248">
    <property type="entry name" value="PRK01160.1-3"/>
    <property type="match status" value="1"/>
</dbReference>
<dbReference type="PANTHER" id="PTHR40732:SF1">
    <property type="entry name" value="GTP-DEPENDENT DEPHOSPHO-COA KINASE"/>
    <property type="match status" value="1"/>
</dbReference>
<dbReference type="PANTHER" id="PTHR40732">
    <property type="entry name" value="UPF0218 PROTEIN TK1697"/>
    <property type="match status" value="1"/>
</dbReference>
<dbReference type="Pfam" id="PF04019">
    <property type="entry name" value="DUF359"/>
    <property type="match status" value="1"/>
</dbReference>
<dbReference type="PIRSF" id="PIRSF006533">
    <property type="entry name" value="UCP006533"/>
    <property type="match status" value="1"/>
</dbReference>